<dbReference type="EC" id="3.1.3.11" evidence="1"/>
<dbReference type="EMBL" id="CP000050">
    <property type="protein sequence ID" value="AAY47189.1"/>
    <property type="molecule type" value="Genomic_DNA"/>
</dbReference>
<dbReference type="RefSeq" id="WP_011035354.1">
    <property type="nucleotide sequence ID" value="NZ_CP155948.1"/>
</dbReference>
<dbReference type="SMR" id="Q4V0I4"/>
<dbReference type="KEGG" id="xcb:XC_0098"/>
<dbReference type="HOGENOM" id="CLU_039977_0_0_6"/>
<dbReference type="UniPathway" id="UPA00138"/>
<dbReference type="Proteomes" id="UP000000420">
    <property type="component" value="Chromosome"/>
</dbReference>
<dbReference type="GO" id="GO:0005829">
    <property type="term" value="C:cytosol"/>
    <property type="evidence" value="ECO:0007669"/>
    <property type="project" value="TreeGrafter"/>
</dbReference>
<dbReference type="GO" id="GO:0042132">
    <property type="term" value="F:fructose 1,6-bisphosphate 1-phosphatase activity"/>
    <property type="evidence" value="ECO:0007669"/>
    <property type="project" value="UniProtKB-UniRule"/>
</dbReference>
<dbReference type="GO" id="GO:0000287">
    <property type="term" value="F:magnesium ion binding"/>
    <property type="evidence" value="ECO:0007669"/>
    <property type="project" value="UniProtKB-UniRule"/>
</dbReference>
<dbReference type="GO" id="GO:0030388">
    <property type="term" value="P:fructose 1,6-bisphosphate metabolic process"/>
    <property type="evidence" value="ECO:0007669"/>
    <property type="project" value="TreeGrafter"/>
</dbReference>
<dbReference type="GO" id="GO:0006002">
    <property type="term" value="P:fructose 6-phosphate metabolic process"/>
    <property type="evidence" value="ECO:0007669"/>
    <property type="project" value="TreeGrafter"/>
</dbReference>
<dbReference type="GO" id="GO:0006000">
    <property type="term" value="P:fructose metabolic process"/>
    <property type="evidence" value="ECO:0007669"/>
    <property type="project" value="TreeGrafter"/>
</dbReference>
<dbReference type="GO" id="GO:0006094">
    <property type="term" value="P:gluconeogenesis"/>
    <property type="evidence" value="ECO:0007669"/>
    <property type="project" value="UniProtKB-UniRule"/>
</dbReference>
<dbReference type="GO" id="GO:0005986">
    <property type="term" value="P:sucrose biosynthetic process"/>
    <property type="evidence" value="ECO:0007669"/>
    <property type="project" value="TreeGrafter"/>
</dbReference>
<dbReference type="CDD" id="cd00354">
    <property type="entry name" value="FBPase"/>
    <property type="match status" value="1"/>
</dbReference>
<dbReference type="FunFam" id="3.30.540.10:FF:000006">
    <property type="entry name" value="Fructose-1,6-bisphosphatase class 1"/>
    <property type="match status" value="1"/>
</dbReference>
<dbReference type="FunFam" id="3.40.190.80:FF:000011">
    <property type="entry name" value="Fructose-1,6-bisphosphatase class 1"/>
    <property type="match status" value="1"/>
</dbReference>
<dbReference type="Gene3D" id="3.40.190.80">
    <property type="match status" value="1"/>
</dbReference>
<dbReference type="Gene3D" id="3.30.540.10">
    <property type="entry name" value="Fructose-1,6-Bisphosphatase, subunit A, domain 1"/>
    <property type="match status" value="1"/>
</dbReference>
<dbReference type="HAMAP" id="MF_01855">
    <property type="entry name" value="FBPase_class1"/>
    <property type="match status" value="1"/>
</dbReference>
<dbReference type="InterPro" id="IPR044015">
    <property type="entry name" value="FBPase_C_dom"/>
</dbReference>
<dbReference type="InterPro" id="IPR000146">
    <property type="entry name" value="FBPase_class-1"/>
</dbReference>
<dbReference type="InterPro" id="IPR033391">
    <property type="entry name" value="FBPase_N"/>
</dbReference>
<dbReference type="InterPro" id="IPR028343">
    <property type="entry name" value="FBPtase"/>
</dbReference>
<dbReference type="NCBIfam" id="NF006779">
    <property type="entry name" value="PRK09293.1-3"/>
    <property type="match status" value="1"/>
</dbReference>
<dbReference type="NCBIfam" id="NF006780">
    <property type="entry name" value="PRK09293.1-4"/>
    <property type="match status" value="1"/>
</dbReference>
<dbReference type="PANTHER" id="PTHR11556">
    <property type="entry name" value="FRUCTOSE-1,6-BISPHOSPHATASE-RELATED"/>
    <property type="match status" value="1"/>
</dbReference>
<dbReference type="PANTHER" id="PTHR11556:SF35">
    <property type="entry name" value="SEDOHEPTULOSE-1,7-BISPHOSPHATASE, CHLOROPLASTIC"/>
    <property type="match status" value="1"/>
</dbReference>
<dbReference type="Pfam" id="PF00316">
    <property type="entry name" value="FBPase"/>
    <property type="match status" value="1"/>
</dbReference>
<dbReference type="Pfam" id="PF18913">
    <property type="entry name" value="FBPase_C"/>
    <property type="match status" value="1"/>
</dbReference>
<dbReference type="PIRSF" id="PIRSF500210">
    <property type="entry name" value="FBPtase"/>
    <property type="match status" value="1"/>
</dbReference>
<dbReference type="PIRSF" id="PIRSF000904">
    <property type="entry name" value="FBPtase_SBPase"/>
    <property type="match status" value="1"/>
</dbReference>
<dbReference type="PRINTS" id="PR00115">
    <property type="entry name" value="F16BPHPHTASE"/>
</dbReference>
<dbReference type="SUPFAM" id="SSF56655">
    <property type="entry name" value="Carbohydrate phosphatase"/>
    <property type="match status" value="1"/>
</dbReference>
<organism>
    <name type="scientific">Xanthomonas campestris pv. campestris (strain 8004)</name>
    <dbReference type="NCBI Taxonomy" id="314565"/>
    <lineage>
        <taxon>Bacteria</taxon>
        <taxon>Pseudomonadati</taxon>
        <taxon>Pseudomonadota</taxon>
        <taxon>Gammaproteobacteria</taxon>
        <taxon>Lysobacterales</taxon>
        <taxon>Lysobacteraceae</taxon>
        <taxon>Xanthomonas</taxon>
    </lineage>
</organism>
<sequence>MSRPSLTRFLIEEQHAGRIDPELRQLITIVSRACKRISIAVSKGALGGVLGDAGTGNVQGEAQKKLDVLSNDILLEANAWGGHLAACASEEMDHSQPVPDQYPSGDFLLLFDPLDGSSNIDVNVSVGTIFSVLRAPKGTEKPGDEHFLQPGTQQVAAGYCIYGPSTMLVLTLGHGTHAFTLEREEGSFLLTQADMRVPEDTAEFAINMSNQRHWEPAMQAYVGDLLAGKDGARGKDFNMRWIASMVADVHRILTRGGIFIYPWDKKDAAKPGKLRLMYEANPMGMLVEQAGGAATTGRERILDIQPTQLHQRVPVFLGSKNEVAEATRYHVEFDKAQG</sequence>
<reference key="1">
    <citation type="journal article" date="2005" name="Genome Res.">
        <title>Comparative and functional genomic analyses of the pathogenicity of phytopathogen Xanthomonas campestris pv. campestris.</title>
        <authorList>
            <person name="Qian W."/>
            <person name="Jia Y."/>
            <person name="Ren S.-X."/>
            <person name="He Y.-Q."/>
            <person name="Feng J.-X."/>
            <person name="Lu L.-F."/>
            <person name="Sun Q."/>
            <person name="Ying G."/>
            <person name="Tang D.-J."/>
            <person name="Tang H."/>
            <person name="Wu W."/>
            <person name="Hao P."/>
            <person name="Wang L."/>
            <person name="Jiang B.-L."/>
            <person name="Zeng S."/>
            <person name="Gu W.-Y."/>
            <person name="Lu G."/>
            <person name="Rong L."/>
            <person name="Tian Y."/>
            <person name="Yao Z."/>
            <person name="Fu G."/>
            <person name="Chen B."/>
            <person name="Fang R."/>
            <person name="Qiang B."/>
            <person name="Chen Z."/>
            <person name="Zhao G.-P."/>
            <person name="Tang J.-L."/>
            <person name="He C."/>
        </authorList>
    </citation>
    <scope>NUCLEOTIDE SEQUENCE [LARGE SCALE GENOMIC DNA]</scope>
    <source>
        <strain>8004</strain>
    </source>
</reference>
<protein>
    <recommendedName>
        <fullName evidence="1">Fructose-1,6-bisphosphatase class 1</fullName>
        <shortName evidence="1">FBPase class 1</shortName>
        <ecNumber evidence="1">3.1.3.11</ecNumber>
    </recommendedName>
    <alternativeName>
        <fullName evidence="1">D-fructose-1,6-bisphosphate 1-phosphohydrolase class 1</fullName>
    </alternativeName>
</protein>
<accession>Q4V0I4</accession>
<proteinExistence type="inferred from homology"/>
<evidence type="ECO:0000255" key="1">
    <source>
        <dbReference type="HAMAP-Rule" id="MF_01855"/>
    </source>
</evidence>
<gene>
    <name evidence="1" type="primary">fbp</name>
    <name type="ordered locus">XC_0098</name>
</gene>
<keyword id="KW-0119">Carbohydrate metabolism</keyword>
<keyword id="KW-0963">Cytoplasm</keyword>
<keyword id="KW-0378">Hydrolase</keyword>
<keyword id="KW-0460">Magnesium</keyword>
<keyword id="KW-0479">Metal-binding</keyword>
<feature type="chain" id="PRO_0000364752" description="Fructose-1,6-bisphosphatase class 1">
    <location>
        <begin position="1"/>
        <end position="338"/>
    </location>
</feature>
<feature type="binding site" evidence="1">
    <location>
        <position position="90"/>
    </location>
    <ligand>
        <name>Mg(2+)</name>
        <dbReference type="ChEBI" id="CHEBI:18420"/>
        <label>1</label>
    </ligand>
</feature>
<feature type="binding site" evidence="1">
    <location>
        <position position="112"/>
    </location>
    <ligand>
        <name>Mg(2+)</name>
        <dbReference type="ChEBI" id="CHEBI:18420"/>
        <label>1</label>
    </ligand>
</feature>
<feature type="binding site" evidence="1">
    <location>
        <position position="112"/>
    </location>
    <ligand>
        <name>Mg(2+)</name>
        <dbReference type="ChEBI" id="CHEBI:18420"/>
        <label>2</label>
    </ligand>
</feature>
<feature type="binding site" evidence="1">
    <location>
        <position position="114"/>
    </location>
    <ligand>
        <name>Mg(2+)</name>
        <dbReference type="ChEBI" id="CHEBI:18420"/>
        <label>1</label>
    </ligand>
</feature>
<feature type="binding site" evidence="1">
    <location>
        <begin position="115"/>
        <end position="118"/>
    </location>
    <ligand>
        <name>substrate</name>
    </ligand>
</feature>
<feature type="binding site" evidence="1">
    <location>
        <position position="115"/>
    </location>
    <ligand>
        <name>Mg(2+)</name>
        <dbReference type="ChEBI" id="CHEBI:18420"/>
        <label>2</label>
    </ligand>
</feature>
<feature type="binding site" evidence="1">
    <location>
        <position position="207"/>
    </location>
    <ligand>
        <name>substrate</name>
    </ligand>
</feature>
<feature type="binding site" evidence="1">
    <location>
        <position position="273"/>
    </location>
    <ligand>
        <name>substrate</name>
    </ligand>
</feature>
<feature type="binding site" evidence="1">
    <location>
        <position position="279"/>
    </location>
    <ligand>
        <name>Mg(2+)</name>
        <dbReference type="ChEBI" id="CHEBI:18420"/>
        <label>2</label>
    </ligand>
</feature>
<name>F16PA_XANC8</name>
<comment type="catalytic activity">
    <reaction evidence="1">
        <text>beta-D-fructose 1,6-bisphosphate + H2O = beta-D-fructose 6-phosphate + phosphate</text>
        <dbReference type="Rhea" id="RHEA:11064"/>
        <dbReference type="ChEBI" id="CHEBI:15377"/>
        <dbReference type="ChEBI" id="CHEBI:32966"/>
        <dbReference type="ChEBI" id="CHEBI:43474"/>
        <dbReference type="ChEBI" id="CHEBI:57634"/>
        <dbReference type="EC" id="3.1.3.11"/>
    </reaction>
</comment>
<comment type="cofactor">
    <cofactor evidence="1">
        <name>Mg(2+)</name>
        <dbReference type="ChEBI" id="CHEBI:18420"/>
    </cofactor>
    <text evidence="1">Binds 2 magnesium ions per subunit.</text>
</comment>
<comment type="pathway">
    <text evidence="1">Carbohydrate biosynthesis; gluconeogenesis.</text>
</comment>
<comment type="subunit">
    <text evidence="1">Homotetramer.</text>
</comment>
<comment type="subcellular location">
    <subcellularLocation>
        <location evidence="1">Cytoplasm</location>
    </subcellularLocation>
</comment>
<comment type="similarity">
    <text evidence="1">Belongs to the FBPase class 1 family.</text>
</comment>